<organism>
    <name type="scientific">Mycobacterium tuberculosis (strain ATCC 25177 / H37Ra)</name>
    <dbReference type="NCBI Taxonomy" id="419947"/>
    <lineage>
        <taxon>Bacteria</taxon>
        <taxon>Bacillati</taxon>
        <taxon>Actinomycetota</taxon>
        <taxon>Actinomycetes</taxon>
        <taxon>Mycobacteriales</taxon>
        <taxon>Mycobacteriaceae</taxon>
        <taxon>Mycobacterium</taxon>
        <taxon>Mycobacterium tuberculosis complex</taxon>
    </lineage>
</organism>
<evidence type="ECO:0000255" key="1">
    <source>
        <dbReference type="HAMAP-Rule" id="MF_01517"/>
    </source>
</evidence>
<keyword id="KW-0520">NAD</keyword>
<keyword id="KW-0560">Oxidoreductase</keyword>
<keyword id="KW-1185">Reference proteome</keyword>
<keyword id="KW-0816">Tricarboxylic acid cycle</keyword>
<proteinExistence type="inferred from homology"/>
<dbReference type="EC" id="1.1.1.37" evidence="1"/>
<dbReference type="EMBL" id="CP000611">
    <property type="protein sequence ID" value="ABQ72988.1"/>
    <property type="molecule type" value="Genomic_DNA"/>
</dbReference>
<dbReference type="RefSeq" id="WP_003406301.1">
    <property type="nucleotide sequence ID" value="NZ_CP016972.1"/>
</dbReference>
<dbReference type="SMR" id="A5U1T8"/>
<dbReference type="KEGG" id="mra:MRA_1249"/>
<dbReference type="eggNOG" id="COG0039">
    <property type="taxonomic scope" value="Bacteria"/>
</dbReference>
<dbReference type="HOGENOM" id="CLU_040727_2_0_11"/>
<dbReference type="Proteomes" id="UP000001988">
    <property type="component" value="Chromosome"/>
</dbReference>
<dbReference type="GO" id="GO:0030060">
    <property type="term" value="F:L-malate dehydrogenase (NAD+) activity"/>
    <property type="evidence" value="ECO:0007669"/>
    <property type="project" value="UniProtKB-UniRule"/>
</dbReference>
<dbReference type="GO" id="GO:0006108">
    <property type="term" value="P:malate metabolic process"/>
    <property type="evidence" value="ECO:0007669"/>
    <property type="project" value="InterPro"/>
</dbReference>
<dbReference type="GO" id="GO:0006099">
    <property type="term" value="P:tricarboxylic acid cycle"/>
    <property type="evidence" value="ECO:0007669"/>
    <property type="project" value="UniProtKB-UniRule"/>
</dbReference>
<dbReference type="CDD" id="cd01338">
    <property type="entry name" value="MDH_chloroplast-like"/>
    <property type="match status" value="1"/>
</dbReference>
<dbReference type="FunFam" id="3.40.50.720:FF:000010">
    <property type="entry name" value="Malate dehydrogenase"/>
    <property type="match status" value="1"/>
</dbReference>
<dbReference type="FunFam" id="3.90.110.10:FF:000002">
    <property type="entry name" value="Malate dehydrogenase"/>
    <property type="match status" value="1"/>
</dbReference>
<dbReference type="Gene3D" id="3.90.110.10">
    <property type="entry name" value="Lactate dehydrogenase/glycoside hydrolase, family 4, C-terminal"/>
    <property type="match status" value="1"/>
</dbReference>
<dbReference type="Gene3D" id="3.40.50.720">
    <property type="entry name" value="NAD(P)-binding Rossmann-like Domain"/>
    <property type="match status" value="1"/>
</dbReference>
<dbReference type="HAMAP" id="MF_01517">
    <property type="entry name" value="Malate_dehydrog_2"/>
    <property type="match status" value="1"/>
</dbReference>
<dbReference type="InterPro" id="IPR001557">
    <property type="entry name" value="L-lactate/malate_DH"/>
</dbReference>
<dbReference type="InterPro" id="IPR022383">
    <property type="entry name" value="Lactate/malate_DH_C"/>
</dbReference>
<dbReference type="InterPro" id="IPR001236">
    <property type="entry name" value="Lactate/malate_DH_N"/>
</dbReference>
<dbReference type="InterPro" id="IPR015955">
    <property type="entry name" value="Lactate_DH/Glyco_Ohase_4_C"/>
</dbReference>
<dbReference type="InterPro" id="IPR001252">
    <property type="entry name" value="Malate_DH_AS"/>
</dbReference>
<dbReference type="InterPro" id="IPR010945">
    <property type="entry name" value="Malate_DH_type2"/>
</dbReference>
<dbReference type="InterPro" id="IPR036291">
    <property type="entry name" value="NAD(P)-bd_dom_sf"/>
</dbReference>
<dbReference type="NCBIfam" id="TIGR01759">
    <property type="entry name" value="MalateDH-SF1"/>
    <property type="match status" value="1"/>
</dbReference>
<dbReference type="NCBIfam" id="NF003916">
    <property type="entry name" value="PRK05442.1"/>
    <property type="match status" value="1"/>
</dbReference>
<dbReference type="PANTHER" id="PTHR23382">
    <property type="entry name" value="MALATE DEHYDROGENASE"/>
    <property type="match status" value="1"/>
</dbReference>
<dbReference type="Pfam" id="PF02866">
    <property type="entry name" value="Ldh_1_C"/>
    <property type="match status" value="1"/>
</dbReference>
<dbReference type="Pfam" id="PF00056">
    <property type="entry name" value="Ldh_1_N"/>
    <property type="match status" value="1"/>
</dbReference>
<dbReference type="PIRSF" id="PIRSF000102">
    <property type="entry name" value="Lac_mal_DH"/>
    <property type="match status" value="1"/>
</dbReference>
<dbReference type="SUPFAM" id="SSF56327">
    <property type="entry name" value="LDH C-terminal domain-like"/>
    <property type="match status" value="1"/>
</dbReference>
<dbReference type="SUPFAM" id="SSF51735">
    <property type="entry name" value="NAD(P)-binding Rossmann-fold domains"/>
    <property type="match status" value="1"/>
</dbReference>
<dbReference type="PROSITE" id="PS00068">
    <property type="entry name" value="MDH"/>
    <property type="match status" value="1"/>
</dbReference>
<comment type="function">
    <text evidence="1">Catalyzes the reversible oxidation of malate to oxaloacetate.</text>
</comment>
<comment type="catalytic activity">
    <reaction evidence="1">
        <text>(S)-malate + NAD(+) = oxaloacetate + NADH + H(+)</text>
        <dbReference type="Rhea" id="RHEA:21432"/>
        <dbReference type="ChEBI" id="CHEBI:15378"/>
        <dbReference type="ChEBI" id="CHEBI:15589"/>
        <dbReference type="ChEBI" id="CHEBI:16452"/>
        <dbReference type="ChEBI" id="CHEBI:57540"/>
        <dbReference type="ChEBI" id="CHEBI:57945"/>
        <dbReference type="EC" id="1.1.1.37"/>
    </reaction>
</comment>
<comment type="similarity">
    <text evidence="1">Belongs to the LDH/MDH superfamily. MDH type 2 family.</text>
</comment>
<gene>
    <name evidence="1" type="primary">mdh</name>
    <name type="ordered locus">MRA_1249</name>
</gene>
<sequence length="329" mass="34322">MSASPLKVAVTGAAGQIGYSLLFRLASGSLLGPDRPIELRLLEIEPALQALEGVVMELDDCAFPLLSGVEIGSDPQKIFDGVSLALLVGARPRGAGMERSDLLEANGAIFTAQGKALNAVAADDVRVGVTGNPANTNALIAMTNAPDIPRERFSALTRLDHNRAISQLAAKTGAAVTDIKKMTIWGNHSATQYPDLFHAEVAGKNAAEVVNDQAWIEDEFIPTVAKRGAAIIDARGASSAASAASATIDAARDWLLGTPADDWVSMAVVSDGSYGVPEGLISSFPVTTKGGNWTIVSGLEIDEFSRGRIDKSTAELADERSAVTELGLI</sequence>
<feature type="chain" id="PRO_1000068606" description="Malate dehydrogenase">
    <location>
        <begin position="1"/>
        <end position="329"/>
    </location>
</feature>
<feature type="active site" description="Proton acceptor" evidence="1">
    <location>
        <position position="188"/>
    </location>
</feature>
<feature type="binding site" evidence="1">
    <location>
        <begin position="12"/>
        <end position="18"/>
    </location>
    <ligand>
        <name>NAD(+)</name>
        <dbReference type="ChEBI" id="CHEBI:57540"/>
    </ligand>
</feature>
<feature type="binding site" evidence="1">
    <location>
        <position position="93"/>
    </location>
    <ligand>
        <name>substrate</name>
    </ligand>
</feature>
<feature type="binding site" evidence="1">
    <location>
        <position position="99"/>
    </location>
    <ligand>
        <name>substrate</name>
    </ligand>
</feature>
<feature type="binding site" evidence="1">
    <location>
        <position position="106"/>
    </location>
    <ligand>
        <name>NAD(+)</name>
        <dbReference type="ChEBI" id="CHEBI:57540"/>
    </ligand>
</feature>
<feature type="binding site" evidence="1">
    <location>
        <position position="113"/>
    </location>
    <ligand>
        <name>NAD(+)</name>
        <dbReference type="ChEBI" id="CHEBI:57540"/>
    </ligand>
</feature>
<feature type="binding site" evidence="1">
    <location>
        <begin position="130"/>
        <end position="132"/>
    </location>
    <ligand>
        <name>NAD(+)</name>
        <dbReference type="ChEBI" id="CHEBI:57540"/>
    </ligand>
</feature>
<feature type="binding site" evidence="1">
    <location>
        <position position="132"/>
    </location>
    <ligand>
        <name>substrate</name>
    </ligand>
</feature>
<feature type="binding site" evidence="1">
    <location>
        <position position="163"/>
    </location>
    <ligand>
        <name>substrate</name>
    </ligand>
</feature>
<reference key="1">
    <citation type="journal article" date="2008" name="PLoS ONE">
        <title>Genetic basis of virulence attenuation revealed by comparative genomic analysis of Mycobacterium tuberculosis strain H37Ra versus H37Rv.</title>
        <authorList>
            <person name="Zheng H."/>
            <person name="Lu L."/>
            <person name="Wang B."/>
            <person name="Pu S."/>
            <person name="Zhang X."/>
            <person name="Zhu G."/>
            <person name="Shi W."/>
            <person name="Zhang L."/>
            <person name="Wang H."/>
            <person name="Wang S."/>
            <person name="Zhao G."/>
            <person name="Zhang Y."/>
        </authorList>
    </citation>
    <scope>NUCLEOTIDE SEQUENCE [LARGE SCALE GENOMIC DNA]</scope>
    <source>
        <strain>ATCC 25177 / H37Ra</strain>
    </source>
</reference>
<accession>A5U1T8</accession>
<protein>
    <recommendedName>
        <fullName evidence="1">Malate dehydrogenase</fullName>
        <ecNumber evidence="1">1.1.1.37</ecNumber>
    </recommendedName>
</protein>
<name>MDH_MYCTA</name>